<accession>Q98QP6</accession>
<proteinExistence type="inferred from homology"/>
<protein>
    <recommendedName>
        <fullName evidence="1">Uracil phosphoribosyltransferase</fullName>
        <ecNumber evidence="1">2.4.2.9</ecNumber>
    </recommendedName>
    <alternativeName>
        <fullName evidence="1">UMP pyrophosphorylase</fullName>
    </alternativeName>
    <alternativeName>
        <fullName evidence="1">UPRTase</fullName>
    </alternativeName>
</protein>
<comment type="function">
    <text evidence="1">Catalyzes the conversion of uracil and 5-phospho-alpha-D-ribose 1-diphosphate (PRPP) to UMP and diphosphate.</text>
</comment>
<comment type="catalytic activity">
    <reaction evidence="1">
        <text>UMP + diphosphate = 5-phospho-alpha-D-ribose 1-diphosphate + uracil</text>
        <dbReference type="Rhea" id="RHEA:13017"/>
        <dbReference type="ChEBI" id="CHEBI:17568"/>
        <dbReference type="ChEBI" id="CHEBI:33019"/>
        <dbReference type="ChEBI" id="CHEBI:57865"/>
        <dbReference type="ChEBI" id="CHEBI:58017"/>
        <dbReference type="EC" id="2.4.2.9"/>
    </reaction>
</comment>
<comment type="cofactor">
    <cofactor evidence="1">
        <name>Mg(2+)</name>
        <dbReference type="ChEBI" id="CHEBI:18420"/>
    </cofactor>
    <text evidence="1">Binds 1 Mg(2+) ion per subunit. The magnesium is bound as Mg-PRPP.</text>
</comment>
<comment type="activity regulation">
    <text evidence="1">Allosterically activated by GTP.</text>
</comment>
<comment type="pathway">
    <text evidence="1">Pyrimidine metabolism; UMP biosynthesis via salvage pathway; UMP from uracil: step 1/1.</text>
</comment>
<comment type="similarity">
    <text evidence="1">Belongs to the UPRTase family.</text>
</comment>
<keyword id="KW-0021">Allosteric enzyme</keyword>
<keyword id="KW-0328">Glycosyltransferase</keyword>
<keyword id="KW-0342">GTP-binding</keyword>
<keyword id="KW-0460">Magnesium</keyword>
<keyword id="KW-0547">Nucleotide-binding</keyword>
<keyword id="KW-1185">Reference proteome</keyword>
<keyword id="KW-0808">Transferase</keyword>
<evidence type="ECO:0000255" key="1">
    <source>
        <dbReference type="HAMAP-Rule" id="MF_01218"/>
    </source>
</evidence>
<dbReference type="EC" id="2.4.2.9" evidence="1"/>
<dbReference type="EMBL" id="AL445564">
    <property type="protein sequence ID" value="CAC13488.1"/>
    <property type="molecule type" value="Genomic_DNA"/>
</dbReference>
<dbReference type="PIR" id="C90551">
    <property type="entry name" value="C90551"/>
</dbReference>
<dbReference type="RefSeq" id="WP_010925119.1">
    <property type="nucleotide sequence ID" value="NC_002771.1"/>
</dbReference>
<dbReference type="SMR" id="Q98QP6"/>
<dbReference type="STRING" id="272635.gene:17576906"/>
<dbReference type="KEGG" id="mpu:MYPU_3150"/>
<dbReference type="eggNOG" id="COG0035">
    <property type="taxonomic scope" value="Bacteria"/>
</dbReference>
<dbReference type="HOGENOM" id="CLU_067096_2_2_14"/>
<dbReference type="BioCyc" id="MPUL272635:G1GT6-316-MONOMER"/>
<dbReference type="UniPathway" id="UPA00574">
    <property type="reaction ID" value="UER00636"/>
</dbReference>
<dbReference type="Proteomes" id="UP000000528">
    <property type="component" value="Chromosome"/>
</dbReference>
<dbReference type="GO" id="GO:0005525">
    <property type="term" value="F:GTP binding"/>
    <property type="evidence" value="ECO:0007669"/>
    <property type="project" value="UniProtKB-KW"/>
</dbReference>
<dbReference type="GO" id="GO:0000287">
    <property type="term" value="F:magnesium ion binding"/>
    <property type="evidence" value="ECO:0007669"/>
    <property type="project" value="UniProtKB-UniRule"/>
</dbReference>
<dbReference type="GO" id="GO:0004845">
    <property type="term" value="F:uracil phosphoribosyltransferase activity"/>
    <property type="evidence" value="ECO:0007669"/>
    <property type="project" value="UniProtKB-UniRule"/>
</dbReference>
<dbReference type="GO" id="GO:0044206">
    <property type="term" value="P:UMP salvage"/>
    <property type="evidence" value="ECO:0007669"/>
    <property type="project" value="UniProtKB-UniRule"/>
</dbReference>
<dbReference type="GO" id="GO:0006223">
    <property type="term" value="P:uracil salvage"/>
    <property type="evidence" value="ECO:0007669"/>
    <property type="project" value="InterPro"/>
</dbReference>
<dbReference type="CDD" id="cd06223">
    <property type="entry name" value="PRTases_typeI"/>
    <property type="match status" value="1"/>
</dbReference>
<dbReference type="FunFam" id="3.40.50.2020:FF:000003">
    <property type="entry name" value="Uracil phosphoribosyltransferase"/>
    <property type="match status" value="1"/>
</dbReference>
<dbReference type="Gene3D" id="3.40.50.2020">
    <property type="match status" value="1"/>
</dbReference>
<dbReference type="HAMAP" id="MF_01218_B">
    <property type="entry name" value="Upp_B"/>
    <property type="match status" value="1"/>
</dbReference>
<dbReference type="InterPro" id="IPR000836">
    <property type="entry name" value="PRibTrfase_dom"/>
</dbReference>
<dbReference type="InterPro" id="IPR029057">
    <property type="entry name" value="PRTase-like"/>
</dbReference>
<dbReference type="InterPro" id="IPR034332">
    <property type="entry name" value="Upp_B"/>
</dbReference>
<dbReference type="InterPro" id="IPR050054">
    <property type="entry name" value="UPRTase/APRTase"/>
</dbReference>
<dbReference type="InterPro" id="IPR005765">
    <property type="entry name" value="Ura_phspho_trans"/>
</dbReference>
<dbReference type="NCBIfam" id="NF001097">
    <property type="entry name" value="PRK00129.1"/>
    <property type="match status" value="1"/>
</dbReference>
<dbReference type="NCBIfam" id="TIGR01091">
    <property type="entry name" value="upp"/>
    <property type="match status" value="1"/>
</dbReference>
<dbReference type="PANTHER" id="PTHR32315">
    <property type="entry name" value="ADENINE PHOSPHORIBOSYLTRANSFERASE"/>
    <property type="match status" value="1"/>
</dbReference>
<dbReference type="PANTHER" id="PTHR32315:SF4">
    <property type="entry name" value="URACIL PHOSPHORIBOSYLTRANSFERASE, CHLOROPLASTIC"/>
    <property type="match status" value="1"/>
</dbReference>
<dbReference type="Pfam" id="PF14681">
    <property type="entry name" value="UPRTase"/>
    <property type="match status" value="1"/>
</dbReference>
<dbReference type="SUPFAM" id="SSF53271">
    <property type="entry name" value="PRTase-like"/>
    <property type="match status" value="1"/>
</dbReference>
<sequence>MLKVIDHPLIKQKLSVIRSQKAGHDVFRKNVIEIASLMTYEVFRNYKLKEIKIDTPVAQDVLAYDYDKEIVIVAILRAGLAMVPGIVNLLPKARVGHIGIFRDEKTFEPNNYFYKIPDVPKDSEILIVDPMLATGNSAVYAIERLKKDGFKNIRLLSLVGVQEGVDNIEKNVGKDFPIFLGSLDEKLNDKKYIVPGLGDAGDRIFGTK</sequence>
<organism>
    <name type="scientific">Mycoplasmopsis pulmonis (strain UAB CTIP)</name>
    <name type="common">Mycoplasma pulmonis</name>
    <dbReference type="NCBI Taxonomy" id="272635"/>
    <lineage>
        <taxon>Bacteria</taxon>
        <taxon>Bacillati</taxon>
        <taxon>Mycoplasmatota</taxon>
        <taxon>Mycoplasmoidales</taxon>
        <taxon>Metamycoplasmataceae</taxon>
        <taxon>Mycoplasmopsis</taxon>
    </lineage>
</organism>
<gene>
    <name evidence="1" type="primary">upp</name>
    <name type="ordered locus">MYPU_3150</name>
</gene>
<name>UPP_MYCPU</name>
<reference key="1">
    <citation type="journal article" date="2001" name="Nucleic Acids Res.">
        <title>The complete genome sequence of the murine respiratory pathogen Mycoplasma pulmonis.</title>
        <authorList>
            <person name="Chambaud I."/>
            <person name="Heilig R."/>
            <person name="Ferris S."/>
            <person name="Barbe V."/>
            <person name="Samson D."/>
            <person name="Galisson F."/>
            <person name="Moszer I."/>
            <person name="Dybvig K."/>
            <person name="Wroblewski H."/>
            <person name="Viari A."/>
            <person name="Rocha E.P.C."/>
            <person name="Blanchard A."/>
        </authorList>
    </citation>
    <scope>NUCLEOTIDE SEQUENCE [LARGE SCALE GENOMIC DNA]</scope>
    <source>
        <strain>UAB CTIP</strain>
    </source>
</reference>
<feature type="chain" id="PRO_0000120857" description="Uracil phosphoribosyltransferase">
    <location>
        <begin position="1"/>
        <end position="208"/>
    </location>
</feature>
<feature type="binding site" evidence="1">
    <location>
        <position position="77"/>
    </location>
    <ligand>
        <name>5-phospho-alpha-D-ribose 1-diphosphate</name>
        <dbReference type="ChEBI" id="CHEBI:58017"/>
    </ligand>
</feature>
<feature type="binding site" evidence="1">
    <location>
        <position position="102"/>
    </location>
    <ligand>
        <name>5-phospho-alpha-D-ribose 1-diphosphate</name>
        <dbReference type="ChEBI" id="CHEBI:58017"/>
    </ligand>
</feature>
<feature type="binding site" evidence="1">
    <location>
        <begin position="129"/>
        <end position="137"/>
    </location>
    <ligand>
        <name>5-phospho-alpha-D-ribose 1-diphosphate</name>
        <dbReference type="ChEBI" id="CHEBI:58017"/>
    </ligand>
</feature>
<feature type="binding site" evidence="1">
    <location>
        <position position="193"/>
    </location>
    <ligand>
        <name>uracil</name>
        <dbReference type="ChEBI" id="CHEBI:17568"/>
    </ligand>
</feature>
<feature type="binding site" evidence="1">
    <location>
        <begin position="198"/>
        <end position="200"/>
    </location>
    <ligand>
        <name>uracil</name>
        <dbReference type="ChEBI" id="CHEBI:17568"/>
    </ligand>
</feature>
<feature type="binding site" evidence="1">
    <location>
        <position position="199"/>
    </location>
    <ligand>
        <name>5-phospho-alpha-D-ribose 1-diphosphate</name>
        <dbReference type="ChEBI" id="CHEBI:58017"/>
    </ligand>
</feature>